<protein>
    <recommendedName>
        <fullName evidence="2">D-alanine--D-alanine ligase</fullName>
        <ecNumber evidence="2">6.3.2.4</ecNumber>
    </recommendedName>
    <alternativeName>
        <fullName evidence="2">D-Ala-D-Ala ligase</fullName>
    </alternativeName>
    <alternativeName>
        <fullName evidence="2">D-alanylalanine synthetase</fullName>
    </alternativeName>
</protein>
<proteinExistence type="inferred from homology"/>
<keyword id="KW-0067">ATP-binding</keyword>
<keyword id="KW-0133">Cell shape</keyword>
<keyword id="KW-0961">Cell wall biogenesis/degradation</keyword>
<keyword id="KW-0963">Cytoplasm</keyword>
<keyword id="KW-0436">Ligase</keyword>
<keyword id="KW-0460">Magnesium</keyword>
<keyword id="KW-0464">Manganese</keyword>
<keyword id="KW-0479">Metal-binding</keyword>
<keyword id="KW-0547">Nucleotide-binding</keyword>
<keyword id="KW-0573">Peptidoglycan synthesis</keyword>
<feature type="chain" id="PRO_1000074766" description="D-alanine--D-alanine ligase">
    <location>
        <begin position="1"/>
        <end position="346"/>
    </location>
</feature>
<feature type="domain" description="ATP-grasp" evidence="2">
    <location>
        <begin position="133"/>
        <end position="327"/>
    </location>
</feature>
<feature type="binding site" evidence="2">
    <location>
        <begin position="159"/>
        <end position="211"/>
    </location>
    <ligand>
        <name>ATP</name>
        <dbReference type="ChEBI" id="CHEBI:30616"/>
    </ligand>
</feature>
<feature type="binding site" evidence="2">
    <location>
        <position position="284"/>
    </location>
    <ligand>
        <name>Mg(2+)</name>
        <dbReference type="ChEBI" id="CHEBI:18420"/>
        <label>1</label>
    </ligand>
</feature>
<feature type="binding site" evidence="2">
    <location>
        <position position="296"/>
    </location>
    <ligand>
        <name>Mg(2+)</name>
        <dbReference type="ChEBI" id="CHEBI:18420"/>
        <label>1</label>
    </ligand>
</feature>
<feature type="binding site" evidence="2">
    <location>
        <position position="296"/>
    </location>
    <ligand>
        <name>Mg(2+)</name>
        <dbReference type="ChEBI" id="CHEBI:18420"/>
        <label>2</label>
    </ligand>
</feature>
<feature type="binding site" evidence="2">
    <location>
        <position position="298"/>
    </location>
    <ligand>
        <name>Mg(2+)</name>
        <dbReference type="ChEBI" id="CHEBI:18420"/>
        <label>2</label>
    </ligand>
</feature>
<organism>
    <name type="scientific">Campylobacter jejuni subsp. doylei (strain ATCC BAA-1458 / RM4099 / 269.97)</name>
    <dbReference type="NCBI Taxonomy" id="360109"/>
    <lineage>
        <taxon>Bacteria</taxon>
        <taxon>Pseudomonadati</taxon>
        <taxon>Campylobacterota</taxon>
        <taxon>Epsilonproteobacteria</taxon>
        <taxon>Campylobacterales</taxon>
        <taxon>Campylobacteraceae</taxon>
        <taxon>Campylobacter</taxon>
    </lineage>
</organism>
<comment type="function">
    <text evidence="2">Cell wall formation.</text>
</comment>
<comment type="catalytic activity">
    <reaction evidence="2">
        <text>2 D-alanine + ATP = D-alanyl-D-alanine + ADP + phosphate + H(+)</text>
        <dbReference type="Rhea" id="RHEA:11224"/>
        <dbReference type="ChEBI" id="CHEBI:15378"/>
        <dbReference type="ChEBI" id="CHEBI:30616"/>
        <dbReference type="ChEBI" id="CHEBI:43474"/>
        <dbReference type="ChEBI" id="CHEBI:57416"/>
        <dbReference type="ChEBI" id="CHEBI:57822"/>
        <dbReference type="ChEBI" id="CHEBI:456216"/>
        <dbReference type="EC" id="6.3.2.4"/>
    </reaction>
</comment>
<comment type="cofactor">
    <cofactor evidence="1">
        <name>Mg(2+)</name>
        <dbReference type="ChEBI" id="CHEBI:18420"/>
    </cofactor>
    <cofactor evidence="1">
        <name>Mn(2+)</name>
        <dbReference type="ChEBI" id="CHEBI:29035"/>
    </cofactor>
    <text evidence="1">Binds 2 magnesium or manganese ions per subunit.</text>
</comment>
<comment type="pathway">
    <text evidence="2">Cell wall biogenesis; peptidoglycan biosynthesis.</text>
</comment>
<comment type="subcellular location">
    <subcellularLocation>
        <location evidence="2">Cytoplasm</location>
    </subcellularLocation>
</comment>
<comment type="similarity">
    <text evidence="2">Belongs to the D-alanine--D-alanine ligase family.</text>
</comment>
<dbReference type="EC" id="6.3.2.4" evidence="2"/>
<dbReference type="EMBL" id="CP000768">
    <property type="protein sequence ID" value="ABS44797.1"/>
    <property type="molecule type" value="Genomic_DNA"/>
</dbReference>
<dbReference type="SMR" id="A7H451"/>
<dbReference type="KEGG" id="cjd:JJD26997_1212"/>
<dbReference type="HOGENOM" id="CLU_039268_0_2_7"/>
<dbReference type="UniPathway" id="UPA00219"/>
<dbReference type="Proteomes" id="UP000002302">
    <property type="component" value="Chromosome"/>
</dbReference>
<dbReference type="GO" id="GO:0005737">
    <property type="term" value="C:cytoplasm"/>
    <property type="evidence" value="ECO:0007669"/>
    <property type="project" value="UniProtKB-SubCell"/>
</dbReference>
<dbReference type="GO" id="GO:0005524">
    <property type="term" value="F:ATP binding"/>
    <property type="evidence" value="ECO:0007669"/>
    <property type="project" value="UniProtKB-KW"/>
</dbReference>
<dbReference type="GO" id="GO:0008716">
    <property type="term" value="F:D-alanine-D-alanine ligase activity"/>
    <property type="evidence" value="ECO:0007669"/>
    <property type="project" value="UniProtKB-UniRule"/>
</dbReference>
<dbReference type="GO" id="GO:0046872">
    <property type="term" value="F:metal ion binding"/>
    <property type="evidence" value="ECO:0007669"/>
    <property type="project" value="UniProtKB-KW"/>
</dbReference>
<dbReference type="GO" id="GO:0071555">
    <property type="term" value="P:cell wall organization"/>
    <property type="evidence" value="ECO:0007669"/>
    <property type="project" value="UniProtKB-KW"/>
</dbReference>
<dbReference type="GO" id="GO:0009252">
    <property type="term" value="P:peptidoglycan biosynthetic process"/>
    <property type="evidence" value="ECO:0007669"/>
    <property type="project" value="UniProtKB-UniRule"/>
</dbReference>
<dbReference type="GO" id="GO:0008360">
    <property type="term" value="P:regulation of cell shape"/>
    <property type="evidence" value="ECO:0007669"/>
    <property type="project" value="UniProtKB-KW"/>
</dbReference>
<dbReference type="Gene3D" id="3.40.50.20">
    <property type="match status" value="1"/>
</dbReference>
<dbReference type="Gene3D" id="3.30.1490.20">
    <property type="entry name" value="ATP-grasp fold, A domain"/>
    <property type="match status" value="1"/>
</dbReference>
<dbReference type="Gene3D" id="3.30.470.20">
    <property type="entry name" value="ATP-grasp fold, B domain"/>
    <property type="match status" value="1"/>
</dbReference>
<dbReference type="HAMAP" id="MF_00047">
    <property type="entry name" value="Dala_Dala_lig"/>
    <property type="match status" value="1"/>
</dbReference>
<dbReference type="InterPro" id="IPR011761">
    <property type="entry name" value="ATP-grasp"/>
</dbReference>
<dbReference type="InterPro" id="IPR013815">
    <property type="entry name" value="ATP_grasp_subdomain_1"/>
</dbReference>
<dbReference type="InterPro" id="IPR000291">
    <property type="entry name" value="D-Ala_lig_Van_CS"/>
</dbReference>
<dbReference type="InterPro" id="IPR005905">
    <property type="entry name" value="D_ala_D_ala"/>
</dbReference>
<dbReference type="InterPro" id="IPR011095">
    <property type="entry name" value="Dala_Dala_lig_C"/>
</dbReference>
<dbReference type="InterPro" id="IPR011127">
    <property type="entry name" value="Dala_Dala_lig_N"/>
</dbReference>
<dbReference type="InterPro" id="IPR016185">
    <property type="entry name" value="PreATP-grasp_dom_sf"/>
</dbReference>
<dbReference type="NCBIfam" id="TIGR01205">
    <property type="entry name" value="D_ala_D_alaTIGR"/>
    <property type="match status" value="1"/>
</dbReference>
<dbReference type="NCBIfam" id="NF002527">
    <property type="entry name" value="PRK01966.1-3"/>
    <property type="match status" value="1"/>
</dbReference>
<dbReference type="PANTHER" id="PTHR23132">
    <property type="entry name" value="D-ALANINE--D-ALANINE LIGASE"/>
    <property type="match status" value="1"/>
</dbReference>
<dbReference type="PANTHER" id="PTHR23132:SF23">
    <property type="entry name" value="D-ALANINE--D-ALANINE LIGASE B"/>
    <property type="match status" value="1"/>
</dbReference>
<dbReference type="Pfam" id="PF07478">
    <property type="entry name" value="Dala_Dala_lig_C"/>
    <property type="match status" value="1"/>
</dbReference>
<dbReference type="Pfam" id="PF01820">
    <property type="entry name" value="Dala_Dala_lig_N"/>
    <property type="match status" value="1"/>
</dbReference>
<dbReference type="SUPFAM" id="SSF56059">
    <property type="entry name" value="Glutathione synthetase ATP-binding domain-like"/>
    <property type="match status" value="1"/>
</dbReference>
<dbReference type="SUPFAM" id="SSF52440">
    <property type="entry name" value="PreATP-grasp domain"/>
    <property type="match status" value="1"/>
</dbReference>
<dbReference type="PROSITE" id="PS50975">
    <property type="entry name" value="ATP_GRASP"/>
    <property type="match status" value="1"/>
</dbReference>
<dbReference type="PROSITE" id="PS00843">
    <property type="entry name" value="DALA_DALA_LIGASE_1"/>
    <property type="match status" value="1"/>
</dbReference>
<dbReference type="PROSITE" id="PS00844">
    <property type="entry name" value="DALA_DALA_LIGASE_2"/>
    <property type="match status" value="1"/>
</dbReference>
<sequence length="346" mass="39776">MKFAILFGGNSYEHEISIVSAVALKKVINQNLEFIFCDEERRFYHIPSEKMNSKTFSTKAYKKEKELFIQQGGFFSKGFLKENKLECECVINLIHGGDGEDGKIAALFEFYSIKFIGPRLEASVLSFNKELTKLYAKSVGVKTLDYTMLRKGQNSKEKLRFPCIIKPARLGSSIGISIVKDEKDLEYAKDVGFEFDNDLVVEEFKNNIKEYNLAGCVINDKFVFSIIEEPKKKEFLDFEQKYLSFSGHNELIEANLSEELKEKLKDSFKKIYNPLFKGALIRCDFFILDNEVYLNEINPNPGSLANYLFKDFSTTLNTLADQIPLEKMIKINYNFLHSINGQKGKL</sequence>
<reference key="1">
    <citation type="submission" date="2007-07" db="EMBL/GenBank/DDBJ databases">
        <title>Complete genome sequence of Campylobacter jejuni subsp doylei 269.97 isolated from human blood.</title>
        <authorList>
            <person name="Fouts D.E."/>
            <person name="Mongodin E.F."/>
            <person name="Puiu D."/>
            <person name="Sebastian Y."/>
            <person name="Miller W.G."/>
            <person name="Mandrell R.E."/>
            <person name="Lastovica A.J."/>
            <person name="Nelson K.E."/>
        </authorList>
    </citation>
    <scope>NUCLEOTIDE SEQUENCE [LARGE SCALE GENOMIC DNA]</scope>
    <source>
        <strain>ATCC BAA-1458 / RM4099 / 269.97</strain>
    </source>
</reference>
<accession>A7H451</accession>
<name>DDL_CAMJD</name>
<gene>
    <name evidence="2" type="primary">ddl</name>
    <name type="ordered locus">JJD26997_1212</name>
</gene>
<evidence type="ECO:0000250" key="1"/>
<evidence type="ECO:0000255" key="2">
    <source>
        <dbReference type="HAMAP-Rule" id="MF_00047"/>
    </source>
</evidence>